<proteinExistence type="evidence at transcript level"/>
<sequence>MKLIKFLGGVVFFTLMFSGYSEQNQVNVLCSTDWFMVTVHPFLLNNDVFVHFYEVHLGLGCPPNHIHPHFYQFNYRVTECGIRIKAVSPDVVIYSSEIHYASKGSSARYVIPVSCAAPRRSPWLTKPYSAKAPSSNMGATPKNDTSYHVFTLPEPSQQPNCSCPPYVFNQKSM</sequence>
<protein>
    <recommendedName>
        <fullName>Placenta-specific protein 1</fullName>
    </recommendedName>
</protein>
<keyword id="KW-0217">Developmental protein</keyword>
<keyword id="KW-1185">Reference proteome</keyword>
<keyword id="KW-0964">Secreted</keyword>
<keyword id="KW-0732">Signal</keyword>
<comment type="function">
    <text evidence="1">May play a role in placental development.</text>
</comment>
<comment type="subcellular location">
    <subcellularLocation>
        <location evidence="3">Secreted</location>
    </subcellularLocation>
</comment>
<comment type="similarity">
    <text evidence="3">Belongs to the PLAC1 family.</text>
</comment>
<gene>
    <name evidence="4" type="primary">Plac1</name>
</gene>
<evidence type="ECO:0000250" key="1">
    <source>
        <dbReference type="UniProtKB" id="Q9HBJ0"/>
    </source>
</evidence>
<evidence type="ECO:0000255" key="2"/>
<evidence type="ECO:0000305" key="3"/>
<evidence type="ECO:0000312" key="4">
    <source>
        <dbReference type="EMBL" id="AAH97979.1"/>
    </source>
</evidence>
<accession>Q4V7E2</accession>
<reference key="1">
    <citation type="journal article" date="2004" name="Genome Res.">
        <title>The status, quality, and expansion of the NIH full-length cDNA project: the Mammalian Gene Collection (MGC).</title>
        <authorList>
            <consortium name="The MGC Project Team"/>
        </authorList>
    </citation>
    <scope>NUCLEOTIDE SEQUENCE [LARGE SCALE MRNA]</scope>
    <source>
        <tissue>Placenta</tissue>
    </source>
</reference>
<feature type="signal peptide" evidence="2">
    <location>
        <begin position="1"/>
        <end position="23"/>
    </location>
</feature>
<feature type="chain" id="PRO_0000244489" description="Placenta-specific protein 1" evidence="2">
    <location>
        <begin position="24"/>
        <end position="173"/>
    </location>
</feature>
<dbReference type="EMBL" id="BC097979">
    <property type="protein sequence ID" value="AAH97979.1"/>
    <property type="molecule type" value="mRNA"/>
</dbReference>
<dbReference type="RefSeq" id="NP_001020065.1">
    <property type="nucleotide sequence ID" value="NM_001024894.1"/>
</dbReference>
<dbReference type="RefSeq" id="NP_001421032.1">
    <property type="nucleotide sequence ID" value="NM_001434103.1"/>
</dbReference>
<dbReference type="RefSeq" id="XP_006257728.1">
    <property type="nucleotide sequence ID" value="XM_006257666.2"/>
</dbReference>
<dbReference type="RefSeq" id="XP_006257731.1">
    <property type="nucleotide sequence ID" value="XM_006257669.3"/>
</dbReference>
<dbReference type="RefSeq" id="XP_017457545.1">
    <property type="nucleotide sequence ID" value="XM_017602056.1"/>
</dbReference>
<dbReference type="RefSeq" id="XP_017457546.1">
    <property type="nucleotide sequence ID" value="XM_017602057.1"/>
</dbReference>
<dbReference type="SMR" id="Q4V7E2"/>
<dbReference type="FunCoup" id="Q4V7E2">
    <property type="interactions" value="1"/>
</dbReference>
<dbReference type="STRING" id="10116.ENSRNOP00000003235"/>
<dbReference type="PhosphoSitePlus" id="Q4V7E2"/>
<dbReference type="PaxDb" id="10116-ENSRNOP00000003235"/>
<dbReference type="Ensembl" id="ENSRNOT00000003235.8">
    <property type="protein sequence ID" value="ENSRNOP00000003235.4"/>
    <property type="gene ID" value="ENSRNOG00000002379.8"/>
</dbReference>
<dbReference type="Ensembl" id="ENSRNOT00000074170.2">
    <property type="protein sequence ID" value="ENSRNOP00000064922.1"/>
    <property type="gene ID" value="ENSRNOG00000002379.8"/>
</dbReference>
<dbReference type="Ensembl" id="ENSRNOT00000094212.1">
    <property type="protein sequence ID" value="ENSRNOP00000079856.1"/>
    <property type="gene ID" value="ENSRNOG00000002379.8"/>
</dbReference>
<dbReference type="Ensembl" id="ENSRNOT00000114351.1">
    <property type="protein sequence ID" value="ENSRNOP00000093046.1"/>
    <property type="gene ID" value="ENSRNOG00000002379.8"/>
</dbReference>
<dbReference type="GeneID" id="317316"/>
<dbReference type="KEGG" id="rno:317316"/>
<dbReference type="AGR" id="RGD:1563777"/>
<dbReference type="CTD" id="10761"/>
<dbReference type="RGD" id="1563777">
    <property type="gene designation" value="Plac1"/>
</dbReference>
<dbReference type="eggNOG" id="ENOG502RMFF">
    <property type="taxonomic scope" value="Eukaryota"/>
</dbReference>
<dbReference type="GeneTree" id="ENSGT00530000064049"/>
<dbReference type="HOGENOM" id="CLU_118376_0_0_1"/>
<dbReference type="InParanoid" id="Q4V7E2"/>
<dbReference type="OrthoDB" id="9830918at2759"/>
<dbReference type="PhylomeDB" id="Q4V7E2"/>
<dbReference type="TreeFam" id="TF338479"/>
<dbReference type="PRO" id="PR:Q4V7E2"/>
<dbReference type="Proteomes" id="UP000002494">
    <property type="component" value="Chromosome X"/>
</dbReference>
<dbReference type="Bgee" id="ENSRNOG00000002379">
    <property type="expression patterns" value="Expressed in testis and 1 other cell type or tissue"/>
</dbReference>
<dbReference type="GO" id="GO:0005576">
    <property type="term" value="C:extracellular region"/>
    <property type="evidence" value="ECO:0007669"/>
    <property type="project" value="UniProtKB-SubCell"/>
</dbReference>
<dbReference type="GO" id="GO:0001890">
    <property type="term" value="P:placenta development"/>
    <property type="evidence" value="ECO:0000250"/>
    <property type="project" value="UniProtKB"/>
</dbReference>
<dbReference type="GO" id="GO:0090214">
    <property type="term" value="P:spongiotrophoblast layer developmental growth"/>
    <property type="evidence" value="ECO:0000266"/>
    <property type="project" value="RGD"/>
</dbReference>
<dbReference type="FunFam" id="2.60.40.3210:FF:000011">
    <property type="entry name" value="Placenta-specific protein 1"/>
    <property type="match status" value="1"/>
</dbReference>
<dbReference type="Gene3D" id="2.60.40.3210">
    <property type="entry name" value="Zona pellucida, ZP-N domain"/>
    <property type="match status" value="1"/>
</dbReference>
<dbReference type="InterPro" id="IPR033222">
    <property type="entry name" value="PLAC1_fam"/>
</dbReference>
<dbReference type="InterPro" id="IPR055356">
    <property type="entry name" value="ZP-N"/>
</dbReference>
<dbReference type="PANTHER" id="PTHR14380">
    <property type="entry name" value="PLACENTA-SPECIFIC PROTEIN 1"/>
    <property type="match status" value="1"/>
</dbReference>
<dbReference type="PANTHER" id="PTHR14380:SF2">
    <property type="entry name" value="PLACENTA-SPECIFIC PROTEIN 1"/>
    <property type="match status" value="1"/>
</dbReference>
<dbReference type="Pfam" id="PF23344">
    <property type="entry name" value="ZP-N"/>
    <property type="match status" value="1"/>
</dbReference>
<name>PLAC1_RAT</name>
<organism>
    <name type="scientific">Rattus norvegicus</name>
    <name type="common">Rat</name>
    <dbReference type="NCBI Taxonomy" id="10116"/>
    <lineage>
        <taxon>Eukaryota</taxon>
        <taxon>Metazoa</taxon>
        <taxon>Chordata</taxon>
        <taxon>Craniata</taxon>
        <taxon>Vertebrata</taxon>
        <taxon>Euteleostomi</taxon>
        <taxon>Mammalia</taxon>
        <taxon>Eutheria</taxon>
        <taxon>Euarchontoglires</taxon>
        <taxon>Glires</taxon>
        <taxon>Rodentia</taxon>
        <taxon>Myomorpha</taxon>
        <taxon>Muroidea</taxon>
        <taxon>Muridae</taxon>
        <taxon>Murinae</taxon>
        <taxon>Rattus</taxon>
    </lineage>
</organism>